<evidence type="ECO:0000250" key="1"/>
<evidence type="ECO:0000305" key="2"/>
<accession>A9CSZ1</accession>
<proteinExistence type="inferred from homology"/>
<feature type="chain" id="PRO_0000388392" description="Probable glutamate--tRNA ligase, cytoplasmic">
    <location>
        <begin position="1"/>
        <end position="631"/>
    </location>
</feature>
<feature type="short sequence motif" description="'HIGH' region" evidence="1">
    <location>
        <begin position="144"/>
        <end position="153"/>
    </location>
</feature>
<feature type="short sequence motif" description="'KMSKS' region" evidence="1">
    <location>
        <begin position="367"/>
        <end position="371"/>
    </location>
</feature>
<feature type="binding site" evidence="1">
    <location>
        <begin position="139"/>
        <end position="141"/>
    </location>
    <ligand>
        <name>L-glutamate</name>
        <dbReference type="ChEBI" id="CHEBI:29985"/>
    </ligand>
</feature>
<feature type="binding site" evidence="1">
    <location>
        <position position="149"/>
    </location>
    <ligand>
        <name>ATP</name>
        <dbReference type="ChEBI" id="CHEBI:30616"/>
    </ligand>
</feature>
<feature type="binding site" evidence="1">
    <location>
        <position position="173"/>
    </location>
    <ligand>
        <name>L-glutamate</name>
        <dbReference type="ChEBI" id="CHEBI:29985"/>
    </ligand>
</feature>
<feature type="binding site" evidence="1">
    <location>
        <begin position="311"/>
        <end position="315"/>
    </location>
    <ligand>
        <name>L-glutamate</name>
        <dbReference type="ChEBI" id="CHEBI:29985"/>
    </ligand>
</feature>
<feature type="binding site" evidence="1">
    <location>
        <position position="329"/>
    </location>
    <ligand>
        <name>L-glutamate</name>
        <dbReference type="ChEBI" id="CHEBI:29985"/>
    </ligand>
</feature>
<feature type="binding site" evidence="1">
    <location>
        <position position="332"/>
    </location>
    <ligand>
        <name>ATP</name>
        <dbReference type="ChEBI" id="CHEBI:30616"/>
    </ligand>
</feature>
<feature type="binding site" evidence="1">
    <location>
        <begin position="367"/>
        <end position="371"/>
    </location>
    <ligand>
        <name>ATP</name>
        <dbReference type="ChEBI" id="CHEBI:30616"/>
    </ligand>
</feature>
<reference key="1">
    <citation type="journal article" date="2007" name="PLoS ONE">
        <title>Patterns of genome evolution among the microsporidian parasites Encephalitozoon cuniculi, Antonospora locustae and Enterocytozoon bieneusi.</title>
        <authorList>
            <person name="Corradi N."/>
            <person name="Akiyoshi D.E."/>
            <person name="Morrison H.G."/>
            <person name="Feng X."/>
            <person name="Weiss L.M."/>
            <person name="Tzipori S."/>
            <person name="Keeling P.J."/>
        </authorList>
    </citation>
    <scope>NUCLEOTIDE SEQUENCE [LARGE SCALE GENOMIC DNA]</scope>
    <source>
        <strain>H348</strain>
    </source>
</reference>
<reference key="2">
    <citation type="journal article" date="2009" name="PLoS Pathog.">
        <title>Genomic survey of the non-cultivatable opportunistic human pathogen, Enterocytozoon bieneusi.</title>
        <authorList>
            <person name="Akiyoshi D.E."/>
            <person name="Morrison H.G."/>
            <person name="Lei S."/>
            <person name="Feng X."/>
            <person name="Zhang Q."/>
            <person name="Corradi N."/>
            <person name="Mayanja H."/>
            <person name="Tumwine J.K."/>
            <person name="Keeling P.J."/>
            <person name="Weiss L.M."/>
            <person name="Tzipori S."/>
        </authorList>
    </citation>
    <scope>NUCLEOTIDE SEQUENCE [LARGE SCALE GENOMIC DNA]</scope>
    <source>
        <strain>H348</strain>
    </source>
</reference>
<name>SYEC_ENTBH</name>
<gene>
    <name type="ORF">EBI_22577</name>
</gene>
<sequence>MLENISKSEFVNFLLEKKHNIEPKTLPILEQHIREQKLDDFFLDFSIDFTDEELNNFLSKLDYWLKNTKLNSSKADVIFGLLYSCNKFIKLIKNPTFSFVEIKQFYNDILNTNKNYIIEYNKKDKGKINIAVEGNVVTRFPPEPSGFLHIGHIKAALLNDLMAKNGKLLIRFDDTNPIKEEKMYENVIIEDLHTLGIKNYTIVRSSDHFDSLYNYAIQLIQLGLAYCDNTDQLQMREERTKGIPSKNRNTDIETNLSIFSKMSSGNCLDYCLRAKIDYTNLNKALRDPVIYRHIEKEHNITKNKYKIYPTYDFACPIIDSLDGVTLALRTNEYRDRNEQYYWFLEKLNLPNKPKIYDFSRLNFENTVLSKRQMKFYVDNHFVSGWDDPRLSTLRGILRLGMDIDTLKEYIINQGSSQKSSVISWDKVWSLNKKNIDHKSARYSAIPKLYCVECLILDKNNNEIITKTEDIPKFKKNLSLGNKTIIKSSHILISQEDANILNNNEEFTLMNWGNMKVKEKQIVNGIIIKIILEENLAGDVKTTKNKLTWVNKENIIEFKILEYDTLQNDKNTDNLAEKFNTNSKKEEIWLGEKALISVSPKTYIQIERIGFFICDKPLEFILIPYTKQKRMR</sequence>
<comment type="catalytic activity">
    <reaction>
        <text>tRNA(Glu) + L-glutamate + ATP = L-glutamyl-tRNA(Glu) + AMP + diphosphate</text>
        <dbReference type="Rhea" id="RHEA:23540"/>
        <dbReference type="Rhea" id="RHEA-COMP:9663"/>
        <dbReference type="Rhea" id="RHEA-COMP:9680"/>
        <dbReference type="ChEBI" id="CHEBI:29985"/>
        <dbReference type="ChEBI" id="CHEBI:30616"/>
        <dbReference type="ChEBI" id="CHEBI:33019"/>
        <dbReference type="ChEBI" id="CHEBI:78442"/>
        <dbReference type="ChEBI" id="CHEBI:78520"/>
        <dbReference type="ChEBI" id="CHEBI:456215"/>
        <dbReference type="EC" id="6.1.1.17"/>
    </reaction>
</comment>
<comment type="subcellular location">
    <subcellularLocation>
        <location evidence="1">Cytoplasm</location>
    </subcellularLocation>
</comment>
<comment type="similarity">
    <text evidence="2">Belongs to the class-I aminoacyl-tRNA synthetase family. Glutamate--tRNA ligase type 2 subfamily.</text>
</comment>
<protein>
    <recommendedName>
        <fullName>Probable glutamate--tRNA ligase, cytoplasmic</fullName>
        <ecNumber>6.1.1.17</ecNumber>
    </recommendedName>
    <alternativeName>
        <fullName>Glutamyl-tRNA synthetase</fullName>
        <shortName>GluRS</shortName>
    </alternativeName>
</protein>
<dbReference type="EC" id="6.1.1.17"/>
<dbReference type="EMBL" id="ABGB01000003">
    <property type="protein sequence ID" value="EDQ31175.1"/>
    <property type="molecule type" value="Genomic_DNA"/>
</dbReference>
<dbReference type="RefSeq" id="XP_001828010.1">
    <property type="nucleotide sequence ID" value="XM_001827958.1"/>
</dbReference>
<dbReference type="SMR" id="A9CSZ1"/>
<dbReference type="FunCoup" id="A9CSZ1">
    <property type="interactions" value="101"/>
</dbReference>
<dbReference type="STRING" id="481877.A9CSZ1"/>
<dbReference type="VEuPathDB" id="MicrosporidiaDB:EBI_22577"/>
<dbReference type="HOGENOM" id="CLU_001882_1_2_1"/>
<dbReference type="InParanoid" id="A9CSZ1"/>
<dbReference type="OMA" id="ANRYFFV"/>
<dbReference type="OrthoDB" id="10250478at2759"/>
<dbReference type="GO" id="GO:0010494">
    <property type="term" value="C:cytoplasmic stress granule"/>
    <property type="evidence" value="ECO:0007669"/>
    <property type="project" value="EnsemblFungi"/>
</dbReference>
<dbReference type="GO" id="GO:0005829">
    <property type="term" value="C:cytosol"/>
    <property type="evidence" value="ECO:0007669"/>
    <property type="project" value="TreeGrafter"/>
</dbReference>
<dbReference type="GO" id="GO:0017102">
    <property type="term" value="C:methionyl glutamyl tRNA synthetase complex"/>
    <property type="evidence" value="ECO:0007669"/>
    <property type="project" value="EnsemblFungi"/>
</dbReference>
<dbReference type="GO" id="GO:0005739">
    <property type="term" value="C:mitochondrion"/>
    <property type="evidence" value="ECO:0007669"/>
    <property type="project" value="EnsemblFungi"/>
</dbReference>
<dbReference type="GO" id="GO:0005524">
    <property type="term" value="F:ATP binding"/>
    <property type="evidence" value="ECO:0007669"/>
    <property type="project" value="UniProtKB-KW"/>
</dbReference>
<dbReference type="GO" id="GO:0004818">
    <property type="term" value="F:glutamate-tRNA ligase activity"/>
    <property type="evidence" value="ECO:0007669"/>
    <property type="project" value="UniProtKB-EC"/>
</dbReference>
<dbReference type="GO" id="GO:1990825">
    <property type="term" value="F:sequence-specific mRNA binding"/>
    <property type="evidence" value="ECO:0007669"/>
    <property type="project" value="EnsemblFungi"/>
</dbReference>
<dbReference type="GO" id="GO:0006424">
    <property type="term" value="P:glutamyl-tRNA aminoacylation"/>
    <property type="evidence" value="ECO:0007669"/>
    <property type="project" value="EnsemblFungi"/>
</dbReference>
<dbReference type="FunFam" id="1.10.1160.10:FF:000001">
    <property type="entry name" value="Glutamine--tRNA ligase"/>
    <property type="match status" value="1"/>
</dbReference>
<dbReference type="FunFam" id="3.90.800.10:FF:000001">
    <property type="entry name" value="Glutamine--tRNA ligase"/>
    <property type="match status" value="1"/>
</dbReference>
<dbReference type="FunFam" id="3.40.50.620:FF:000037">
    <property type="entry name" value="Glutamine--tRNA ligase cytoplasmic"/>
    <property type="match status" value="1"/>
</dbReference>
<dbReference type="Gene3D" id="1.10.1160.10">
    <property type="entry name" value="Glutamyl-trna Synthetase, Domain 2"/>
    <property type="match status" value="1"/>
</dbReference>
<dbReference type="Gene3D" id="3.90.800.10">
    <property type="entry name" value="Glutamyl-tRNA Synthetase, Domain 3"/>
    <property type="match status" value="1"/>
</dbReference>
<dbReference type="Gene3D" id="3.40.50.620">
    <property type="entry name" value="HUPs"/>
    <property type="match status" value="1"/>
</dbReference>
<dbReference type="HAMAP" id="MF_02076">
    <property type="entry name" value="Glu_tRNA_synth_type2"/>
    <property type="match status" value="1"/>
</dbReference>
<dbReference type="InterPro" id="IPR001412">
    <property type="entry name" value="aa-tRNA-synth_I_CS"/>
</dbReference>
<dbReference type="InterPro" id="IPR050132">
    <property type="entry name" value="Gln/Glu-tRNA_Ligase"/>
</dbReference>
<dbReference type="InterPro" id="IPR004526">
    <property type="entry name" value="Glu-tRNA-synth_arc/euk"/>
</dbReference>
<dbReference type="InterPro" id="IPR000924">
    <property type="entry name" value="Glu/Gln-tRNA-synth"/>
</dbReference>
<dbReference type="InterPro" id="IPR020058">
    <property type="entry name" value="Glu/Gln-tRNA-synth_Ib_cat-dom"/>
</dbReference>
<dbReference type="InterPro" id="IPR020059">
    <property type="entry name" value="Glu/Gln-tRNA-synth_Ib_codon-bd"/>
</dbReference>
<dbReference type="InterPro" id="IPR020061">
    <property type="entry name" value="Glu_tRNA_lig_a-bdl"/>
</dbReference>
<dbReference type="InterPro" id="IPR011035">
    <property type="entry name" value="Ribosomal_bL25/Gln-tRNA_synth"/>
</dbReference>
<dbReference type="InterPro" id="IPR014729">
    <property type="entry name" value="Rossmann-like_a/b/a_fold"/>
</dbReference>
<dbReference type="InterPro" id="IPR049437">
    <property type="entry name" value="tRNA-synt_1c_C2"/>
</dbReference>
<dbReference type="PANTHER" id="PTHR43097:SF5">
    <property type="entry name" value="GLUTAMATE--TRNA LIGASE"/>
    <property type="match status" value="1"/>
</dbReference>
<dbReference type="PANTHER" id="PTHR43097">
    <property type="entry name" value="GLUTAMINE-TRNA LIGASE"/>
    <property type="match status" value="1"/>
</dbReference>
<dbReference type="Pfam" id="PF00749">
    <property type="entry name" value="tRNA-synt_1c"/>
    <property type="match status" value="1"/>
</dbReference>
<dbReference type="Pfam" id="PF03950">
    <property type="entry name" value="tRNA-synt_1c_C"/>
    <property type="match status" value="1"/>
</dbReference>
<dbReference type="Pfam" id="PF20974">
    <property type="entry name" value="tRNA-synt_1c_C2"/>
    <property type="match status" value="1"/>
</dbReference>
<dbReference type="PRINTS" id="PR00987">
    <property type="entry name" value="TRNASYNTHGLU"/>
</dbReference>
<dbReference type="SUPFAM" id="SSF52374">
    <property type="entry name" value="Nucleotidylyl transferase"/>
    <property type="match status" value="1"/>
</dbReference>
<dbReference type="SUPFAM" id="SSF50715">
    <property type="entry name" value="Ribosomal protein L25-like"/>
    <property type="match status" value="1"/>
</dbReference>
<dbReference type="PROSITE" id="PS00178">
    <property type="entry name" value="AA_TRNA_LIGASE_I"/>
    <property type="match status" value="1"/>
</dbReference>
<organism>
    <name type="scientific">Enterocytozoon bieneusi (strain H348)</name>
    <name type="common">Microsporidian parasite</name>
    <dbReference type="NCBI Taxonomy" id="481877"/>
    <lineage>
        <taxon>Eukaryota</taxon>
        <taxon>Fungi</taxon>
        <taxon>Fungi incertae sedis</taxon>
        <taxon>Microsporidia</taxon>
        <taxon>Enterocytozoonidae</taxon>
        <taxon>Enterocytozoon</taxon>
    </lineage>
</organism>
<keyword id="KW-0030">Aminoacyl-tRNA synthetase</keyword>
<keyword id="KW-0067">ATP-binding</keyword>
<keyword id="KW-0963">Cytoplasm</keyword>
<keyword id="KW-0436">Ligase</keyword>
<keyword id="KW-0547">Nucleotide-binding</keyword>
<keyword id="KW-0648">Protein biosynthesis</keyword>